<name>HCT1_ACTRA</name>
<feature type="chain" id="PRO_0000456812" description="Hydroxycinnamoyl-CoA:piscidic acid hydroxycinnamoyltransferase">
    <location>
        <begin position="1"/>
        <end position="448"/>
    </location>
</feature>
<feature type="active site" description="Proton acceptor" evidence="1">
    <location>
        <position position="153"/>
    </location>
</feature>
<feature type="active site" description="Proton acceptor" evidence="1">
    <location>
        <position position="395"/>
    </location>
</feature>
<feature type="sequence conflict" description="In Ref. 2; QAA12830." evidence="6" ref="2">
    <original>E</original>
    <variation>Q</variation>
    <location>
        <position position="180"/>
    </location>
</feature>
<feature type="sequence conflict" description="In Ref. 2; QAA12830." evidence="6" ref="2">
    <original>C</original>
    <variation>Y</variation>
    <location>
        <position position="199"/>
    </location>
</feature>
<feature type="sequence conflict" description="In Ref. 2; QAA12830." evidence="6" ref="2">
    <original>S</original>
    <variation>A</variation>
    <location>
        <position position="243"/>
    </location>
</feature>
<organism evidence="7">
    <name type="scientific">Actaea racemosa</name>
    <name type="common">Black cohosh</name>
    <name type="synonym">Cimicifuga racemosa</name>
    <dbReference type="NCBI Taxonomy" id="64040"/>
    <lineage>
        <taxon>Eukaryota</taxon>
        <taxon>Viridiplantae</taxon>
        <taxon>Streptophyta</taxon>
        <taxon>Embryophyta</taxon>
        <taxon>Tracheophyta</taxon>
        <taxon>Spermatophyta</taxon>
        <taxon>Magnoliopsida</taxon>
        <taxon>Ranunculales</taxon>
        <taxon>Ranunculaceae</taxon>
        <taxon>Ranunculoideae</taxon>
        <taxon>Cimicifugeae</taxon>
        <taxon>Actaea</taxon>
    </lineage>
</organism>
<keyword id="KW-0012">Acyltransferase</keyword>
<keyword id="KW-0017">Alkaloid metabolism</keyword>
<keyword id="KW-0808">Transferase</keyword>
<evidence type="ECO:0000250" key="1">
    <source>
        <dbReference type="UniProtKB" id="Q8W1W9"/>
    </source>
</evidence>
<evidence type="ECO:0000269" key="2">
    <source>
    </source>
</evidence>
<evidence type="ECO:0000269" key="3">
    <source>
    </source>
</evidence>
<evidence type="ECO:0000303" key="4">
    <source>
    </source>
</evidence>
<evidence type="ECO:0000303" key="5">
    <source>
    </source>
</evidence>
<evidence type="ECO:0000305" key="6"/>
<evidence type="ECO:0000312" key="7">
    <source>
        <dbReference type="EMBL" id="ADD71921.1"/>
    </source>
</evidence>
<evidence type="ECO:0000312" key="8">
    <source>
        <dbReference type="EMBL" id="QAA12830.1"/>
    </source>
</evidence>
<reference evidence="7" key="1">
    <citation type="journal article" date="2011" name="Plant Cell Rep.">
        <title>Gene identification in black cohosh (Actaea racemosa L.): expressed sequence tag profiling and genetic screening yields candidate genes for production of bioactive secondary metabolites.</title>
        <authorList>
            <person name="Spiering M.J."/>
            <person name="Urban L.A."/>
            <person name="Nuss D.L."/>
            <person name="Gopalan V."/>
            <person name="Stoltzfus A."/>
            <person name="Eisenstein E."/>
        </authorList>
    </citation>
    <scope>NUCLEOTIDE SEQUENCE [GENOMIC DNA]</scope>
    <scope>TISSUE SPECIFICITY</scope>
</reference>
<reference evidence="8" key="2">
    <citation type="journal article" date="2019" name="Planta">
        <title>A BAHD hydroxycinnamoyltransferase from Actaea racemosa catalyses the formation of fukinolic and cimicifugic acids.</title>
        <authorList>
            <person name="Werner V."/>
            <person name="Petersen M."/>
        </authorList>
    </citation>
    <scope>NUCLEOTIDE SEQUENCE [MRNA]</scope>
    <scope>FUNCTION</scope>
    <scope>CATALYTIC ACTIVITY</scope>
    <scope>SUBSTRATE SPECIFICITY</scope>
    <scope>BIOPHYSICOCHEMICAL PROPERTIES</scope>
    <scope>PATHWAY</scope>
    <scope>TISSUE SPECIFICITY</scope>
    <scope>PHYLOGENETIC ANALYSIS</scope>
    <source>
        <tissue evidence="5">Leaf</tissue>
    </source>
</reference>
<gene>
    <name evidence="4 7" type="primary">HCT1</name>
</gene>
<sequence length="448" mass="49722">MVCIKSSCVVKPSEPTPNVKLFLPESDQVKPWTHAPVFFVYQPEVDNSVSTSLENLKFSLSRALVPYYPLAGRLNGIGGGRFELHCNTMGAVIIEAESDARLEDFGDFRPTSETTKLAPYVDYAKDVSELPLLLVQLTRFKCGGIGIGIAMSHIVSDGKGAFGFITTWAKINRGEKGIIEPFHDRTAFYKGDPTAKPRCDHVELKGYPVLLGNKSAKEERAKETTTRMLNLSKNQVDKLKEKSNLGKPKDYVGREYSRFEAMSGHIWRCASKARRHENEQLTSLRITIDCRNRLRPPLPPRYSGNATMVTTSIAESGELLSNPLGLGFVCSVIRKCIDKVDDDYIKSATDFLISQDDLTPYRSGFHNVGSTEGVFLGNPNLAITSWVGLPINDVDFGWGKPIYMGPTALGYDGKLLIIPGKDDGSVIVPIRLQVAHIDDFEKFFYEDI</sequence>
<accession>D4NUX0</accession>
<accession>A0A6B7DW44</accession>
<protein>
    <recommendedName>
        <fullName evidence="5">Hydroxycinnamoyl-CoA:piscidic acid hydroxycinnamoyltransferase</fullName>
        <ecNumber evidence="3">2.3.1.-</ecNumber>
    </recommendedName>
    <alternativeName>
        <fullName evidence="5">ArHCT1</fullName>
    </alternativeName>
    <alternativeName>
        <fullName evidence="5">ArHPT1</fullName>
    </alternativeName>
    <alternativeName>
        <fullName evidence="8">BAHD acyltransferase/hydroxycinnamoyltransferase</fullName>
    </alternativeName>
    <alternativeName>
        <fullName evidence="4 7">BAHD-type hydroxycinnamoyltransferase</fullName>
    </alternativeName>
    <alternativeName>
        <fullName evidence="5">Cimicifugic acid synthase</fullName>
    </alternativeName>
</protein>
<proteinExistence type="evidence at protein level"/>
<comment type="function">
    <text evidence="3">Catalyzes the formation of cimicifugic acids. Uses hydroxycinnamoyl-CoA thioesters as hydroxycinnamoyl donor substrates. Has a strict specificity for piscidic acid as an acceptor substrate as none of the various other acceptors tested including 4-hydroxyphenyllactic acid, malate, spermidine or tetrahydroxyhexanedioic acid are substrates. Donor substrates include 4-coumaroyl-CoA, caffeoyl-CoA, sinapoyl-CoA and feruloyl-CoA. No activity with cinnamoyl-CoA, isoferuloyl-CoA, 3,4-dimethoxycinnamoyl-CoA or 3,4-dihydroxybenzoyl-CoA as donors. In the reverse reaction with fukinolic acid and CoA as substrates, a formation of fukiic acid is evident. Hence, fukiic acid may also serve as an acceptor substrate. Involved in the biosynthesis of cimicifugic and possibly fukinolic acids.</text>
</comment>
<comment type="catalytic activity">
    <reaction evidence="3">
        <text>(2R,3S)-piscidate + (E)-4-coumaroyl-CoA = cimicifugate K + CoA</text>
        <dbReference type="Rhea" id="RHEA:73319"/>
        <dbReference type="ChEBI" id="CHEBI:57287"/>
        <dbReference type="ChEBI" id="CHEBI:85008"/>
        <dbReference type="ChEBI" id="CHEBI:192789"/>
        <dbReference type="ChEBI" id="CHEBI:192790"/>
    </reaction>
</comment>
<comment type="catalytic activity">
    <reaction evidence="3">
        <text>(2R,3S)-piscidate + (E)-caffeoyl-CoA = cimicifugate D + CoA</text>
        <dbReference type="Rhea" id="RHEA:73323"/>
        <dbReference type="ChEBI" id="CHEBI:57287"/>
        <dbReference type="ChEBI" id="CHEBI:87136"/>
        <dbReference type="ChEBI" id="CHEBI:192789"/>
        <dbReference type="ChEBI" id="CHEBI:192791"/>
    </reaction>
</comment>
<comment type="catalytic activity">
    <reaction evidence="3">
        <text>(2R,3S)-piscidate + (E)-sinapoyl-CoA = cimicifugate J + CoA</text>
        <dbReference type="Rhea" id="RHEA:73327"/>
        <dbReference type="ChEBI" id="CHEBI:57287"/>
        <dbReference type="ChEBI" id="CHEBI:57393"/>
        <dbReference type="ChEBI" id="CHEBI:192789"/>
        <dbReference type="ChEBI" id="CHEBI:192792"/>
    </reaction>
</comment>
<comment type="catalytic activity">
    <reaction evidence="3">
        <text>(2R,3S)-piscidate + (E)-feruloyl-CoA = cimicifugate E + CoA</text>
        <dbReference type="Rhea" id="RHEA:73331"/>
        <dbReference type="ChEBI" id="CHEBI:57287"/>
        <dbReference type="ChEBI" id="CHEBI:87305"/>
        <dbReference type="ChEBI" id="CHEBI:192789"/>
        <dbReference type="ChEBI" id="CHEBI:192793"/>
    </reaction>
</comment>
<comment type="biophysicochemical properties">
    <kinetics>
        <KM evidence="3">6.8 uM for 4-coumaroyl-CoA (at pH 7.0 and 30 degrees Celsius)</KM>
        <KM evidence="3">10.5 uM for sinapoyl-CoA (at pH 7.0 and 30 degrees Celsius)</KM>
        <KM evidence="3">16.3 uM for caffeoyl-CoA (at pH 7.0 and 30 degrees Celsius)</KM>
        <KM evidence="3">51.4 uM for feruloyl-CoA (at pH 7.0 and 30 degrees Celsius)</KM>
        <KM evidence="3">32.3 uM for piscidic acid with 4-coumaroyl-CoA as cosubstrate (at pH 7.0 and 30 degrees Celsius)</KM>
    </kinetics>
    <phDependence>
        <text evidence="3">Optimum pH is 7.0.</text>
    </phDependence>
    <temperatureDependence>
        <text evidence="3">Optimum temperature is 30 degrees Celsius.</text>
    </temperatureDependence>
</comment>
<comment type="pathway">
    <text evidence="3">Phenylpropanoid metabolism.</text>
</comment>
<comment type="tissue specificity">
    <text evidence="2 3">Highly expressed in root and rhizome (PubMed:21188383, PubMed:31069522). Expressed in senescent leaf and callus tissues. Expressed in detached leaf treated for 18 hours with ethephon, methyl jasmonate, salicylic acid or illuminated for 24 hours with UV light. Not expressed in mature leaf (PubMed:21188383). Expressed at low levels in leaves and flowers (PubMed:31069522).</text>
</comment>
<comment type="similarity">
    <text evidence="6">Belongs to the plant acyltransferase family.</text>
</comment>
<dbReference type="EC" id="2.3.1.-" evidence="3"/>
<dbReference type="EMBL" id="GU254280">
    <property type="protein sequence ID" value="ADD71921.1"/>
    <property type="molecule type" value="Genomic_DNA"/>
</dbReference>
<dbReference type="EMBL" id="MH384793">
    <property type="protein sequence ID" value="QAA12830.1"/>
    <property type="molecule type" value="mRNA"/>
</dbReference>
<dbReference type="SMR" id="D4NUX0"/>
<dbReference type="GO" id="GO:0050734">
    <property type="term" value="F:hydroxycinnamoyltransferase activity"/>
    <property type="evidence" value="ECO:0000314"/>
    <property type="project" value="UniProtKB"/>
</dbReference>
<dbReference type="GO" id="GO:0009820">
    <property type="term" value="P:alkaloid metabolic process"/>
    <property type="evidence" value="ECO:0007669"/>
    <property type="project" value="UniProtKB-KW"/>
</dbReference>
<dbReference type="GO" id="GO:0009698">
    <property type="term" value="P:phenylpropanoid metabolic process"/>
    <property type="evidence" value="ECO:0000314"/>
    <property type="project" value="UniProtKB"/>
</dbReference>
<dbReference type="GO" id="GO:0009753">
    <property type="term" value="P:response to jasmonic acid"/>
    <property type="evidence" value="ECO:0000270"/>
    <property type="project" value="UniProtKB"/>
</dbReference>
<dbReference type="GO" id="GO:0009751">
    <property type="term" value="P:response to salicylic acid"/>
    <property type="evidence" value="ECO:0000270"/>
    <property type="project" value="UniProtKB"/>
</dbReference>
<dbReference type="GO" id="GO:0009411">
    <property type="term" value="P:response to UV"/>
    <property type="evidence" value="ECO:0000270"/>
    <property type="project" value="UniProtKB"/>
</dbReference>
<dbReference type="FunFam" id="3.30.559.10:FF:000008">
    <property type="entry name" value="Tryptamine hydroxycinnamoyl transferase"/>
    <property type="match status" value="1"/>
</dbReference>
<dbReference type="Gene3D" id="3.30.559.10">
    <property type="entry name" value="Chloramphenicol acetyltransferase-like domain"/>
    <property type="match status" value="2"/>
</dbReference>
<dbReference type="InterPro" id="IPR023213">
    <property type="entry name" value="CAT-like_dom_sf"/>
</dbReference>
<dbReference type="InterPro" id="IPR050317">
    <property type="entry name" value="Plant_Fungal_Acyltransferase"/>
</dbReference>
<dbReference type="PANTHER" id="PTHR31642:SF324">
    <property type="entry name" value="SPERMIDINE HYDROXYCINNAMOYL TRANSFERASE"/>
    <property type="match status" value="1"/>
</dbReference>
<dbReference type="PANTHER" id="PTHR31642">
    <property type="entry name" value="TRICHOTHECENE 3-O-ACETYLTRANSFERASE"/>
    <property type="match status" value="1"/>
</dbReference>
<dbReference type="Pfam" id="PF02458">
    <property type="entry name" value="Transferase"/>
    <property type="match status" value="1"/>
</dbReference>